<evidence type="ECO:0000250" key="1">
    <source>
        <dbReference type="UniProtKB" id="Q9HAU4"/>
    </source>
</evidence>
<evidence type="ECO:0000255" key="2">
    <source>
        <dbReference type="PROSITE-ProRule" id="PRU00041"/>
    </source>
</evidence>
<evidence type="ECO:0000255" key="3">
    <source>
        <dbReference type="PROSITE-ProRule" id="PRU00104"/>
    </source>
</evidence>
<evidence type="ECO:0000255" key="4">
    <source>
        <dbReference type="PROSITE-ProRule" id="PRU00224"/>
    </source>
</evidence>
<evidence type="ECO:0000256" key="5">
    <source>
        <dbReference type="SAM" id="MobiDB-lite"/>
    </source>
</evidence>
<proteinExistence type="evidence at transcript level"/>
<dbReference type="EC" id="2.3.2.26" evidence="1"/>
<dbReference type="EMBL" id="BC155849">
    <property type="protein sequence ID" value="AAI55850.1"/>
    <property type="molecule type" value="mRNA"/>
</dbReference>
<dbReference type="RefSeq" id="NP_001107898.1">
    <property type="nucleotide sequence ID" value="NM_001114426.1"/>
</dbReference>
<dbReference type="SMR" id="A9JRZ0"/>
<dbReference type="FunCoup" id="A9JRZ0">
    <property type="interactions" value="1468"/>
</dbReference>
<dbReference type="STRING" id="7955.ENSDARP00000055490"/>
<dbReference type="PaxDb" id="7955-ENSDARP00000055490"/>
<dbReference type="PeptideAtlas" id="A9JRZ0"/>
<dbReference type="Ensembl" id="ENSDART00000055491">
    <property type="protein sequence ID" value="ENSDARP00000055490"/>
    <property type="gene ID" value="ENSDARG00000038067"/>
</dbReference>
<dbReference type="GeneID" id="563633"/>
<dbReference type="KEGG" id="dre:563633"/>
<dbReference type="AGR" id="ZFIN:ZDB-GENE-030131-1830"/>
<dbReference type="CTD" id="64750"/>
<dbReference type="ZFIN" id="ZDB-GENE-030131-1830">
    <property type="gene designation" value="smurf2"/>
</dbReference>
<dbReference type="eggNOG" id="KOG0940">
    <property type="taxonomic scope" value="Eukaryota"/>
</dbReference>
<dbReference type="HOGENOM" id="CLU_002173_1_1_1"/>
<dbReference type="InParanoid" id="A9JRZ0"/>
<dbReference type="OMA" id="LIFLICE"/>
<dbReference type="OrthoDB" id="8068875at2759"/>
<dbReference type="PhylomeDB" id="A9JRZ0"/>
<dbReference type="TreeFam" id="TF323658"/>
<dbReference type="Reactome" id="R-DRE-201451">
    <property type="pathway name" value="Signaling by BMP"/>
</dbReference>
<dbReference type="Reactome" id="R-DRE-2173788">
    <property type="pathway name" value="Downregulation of TGF-beta receptor signaling"/>
</dbReference>
<dbReference type="Reactome" id="R-DRE-4608870">
    <property type="pathway name" value="Asymmetric localization of PCP proteins"/>
</dbReference>
<dbReference type="Reactome" id="R-DRE-4641257">
    <property type="pathway name" value="Degradation of AXIN"/>
</dbReference>
<dbReference type="Reactome" id="R-DRE-5689880">
    <property type="pathway name" value="Ub-specific processing proteases"/>
</dbReference>
<dbReference type="Reactome" id="R-DRE-8941858">
    <property type="pathway name" value="Regulation of RUNX3 expression and activity"/>
</dbReference>
<dbReference type="Reactome" id="R-DRE-983168">
    <property type="pathway name" value="Antigen processing: Ubiquitination &amp; Proteasome degradation"/>
</dbReference>
<dbReference type="UniPathway" id="UPA00143"/>
<dbReference type="PRO" id="PR:A9JRZ0"/>
<dbReference type="Proteomes" id="UP000000437">
    <property type="component" value="Chromosome 3"/>
</dbReference>
<dbReference type="Bgee" id="ENSDARG00000038067">
    <property type="expression patterns" value="Expressed in somite and 24 other cell types or tissues"/>
</dbReference>
<dbReference type="GO" id="GO:0005737">
    <property type="term" value="C:cytoplasm"/>
    <property type="evidence" value="ECO:0000318"/>
    <property type="project" value="GO_Central"/>
</dbReference>
<dbReference type="GO" id="GO:0045121">
    <property type="term" value="C:membrane raft"/>
    <property type="evidence" value="ECO:0007669"/>
    <property type="project" value="UniProtKB-SubCell"/>
</dbReference>
<dbReference type="GO" id="GO:0005634">
    <property type="term" value="C:nucleus"/>
    <property type="evidence" value="ECO:0007669"/>
    <property type="project" value="UniProtKB-SubCell"/>
</dbReference>
<dbReference type="GO" id="GO:0005886">
    <property type="term" value="C:plasma membrane"/>
    <property type="evidence" value="ECO:0007669"/>
    <property type="project" value="UniProtKB-SubCell"/>
</dbReference>
<dbReference type="GO" id="GO:0046332">
    <property type="term" value="F:SMAD binding"/>
    <property type="evidence" value="ECO:0000318"/>
    <property type="project" value="GO_Central"/>
</dbReference>
<dbReference type="GO" id="GO:0061630">
    <property type="term" value="F:ubiquitin protein ligase activity"/>
    <property type="evidence" value="ECO:0000318"/>
    <property type="project" value="GO_Central"/>
</dbReference>
<dbReference type="GO" id="GO:0030514">
    <property type="term" value="P:negative regulation of BMP signaling pathway"/>
    <property type="evidence" value="ECO:0000318"/>
    <property type="project" value="GO_Central"/>
</dbReference>
<dbReference type="GO" id="GO:0043161">
    <property type="term" value="P:proteasome-mediated ubiquitin-dependent protein catabolic process"/>
    <property type="evidence" value="ECO:0000318"/>
    <property type="project" value="GO_Central"/>
</dbReference>
<dbReference type="GO" id="GO:0016567">
    <property type="term" value="P:protein ubiquitination"/>
    <property type="evidence" value="ECO:0007669"/>
    <property type="project" value="UniProtKB-UniPathway"/>
</dbReference>
<dbReference type="CDD" id="cd08382">
    <property type="entry name" value="C2_Smurf-like"/>
    <property type="match status" value="1"/>
</dbReference>
<dbReference type="CDD" id="cd00078">
    <property type="entry name" value="HECTc"/>
    <property type="match status" value="1"/>
</dbReference>
<dbReference type="CDD" id="cd00201">
    <property type="entry name" value="WW"/>
    <property type="match status" value="3"/>
</dbReference>
<dbReference type="FunFam" id="2.20.70.10:FF:000017">
    <property type="entry name" value="E3 ubiquitin-protein ligase"/>
    <property type="match status" value="1"/>
</dbReference>
<dbReference type="FunFam" id="2.20.70.10:FF:000026">
    <property type="entry name" value="E3 ubiquitin-protein ligase"/>
    <property type="match status" value="1"/>
</dbReference>
<dbReference type="FunFam" id="2.20.70.10:FF:000047">
    <property type="entry name" value="E3 ubiquitin-protein ligase"/>
    <property type="match status" value="1"/>
</dbReference>
<dbReference type="FunFam" id="2.60.40.150:FF:000024">
    <property type="entry name" value="E3 ubiquitin-protein ligase"/>
    <property type="match status" value="1"/>
</dbReference>
<dbReference type="FunFam" id="3.30.2160.10:FF:000001">
    <property type="entry name" value="E3 ubiquitin-protein ligase NEDD4-like"/>
    <property type="match status" value="1"/>
</dbReference>
<dbReference type="FunFam" id="3.30.2410.10:FF:000014">
    <property type="entry name" value="E3 ubiquitin-protein ligase SMURF1"/>
    <property type="match status" value="1"/>
</dbReference>
<dbReference type="FunFam" id="3.90.1750.10:FF:000007">
    <property type="entry name" value="E3 ubiquitin-protein ligase SMURF2"/>
    <property type="match status" value="1"/>
</dbReference>
<dbReference type="Gene3D" id="2.20.70.10">
    <property type="match status" value="2"/>
</dbReference>
<dbReference type="Gene3D" id="2.60.40.150">
    <property type="entry name" value="C2 domain"/>
    <property type="match status" value="1"/>
</dbReference>
<dbReference type="Gene3D" id="3.30.2160.10">
    <property type="entry name" value="Hect, E3 ligase catalytic domain"/>
    <property type="match status" value="1"/>
</dbReference>
<dbReference type="Gene3D" id="3.30.2410.10">
    <property type="entry name" value="Hect, E3 ligase catalytic domain"/>
    <property type="match status" value="1"/>
</dbReference>
<dbReference type="Gene3D" id="3.90.1750.10">
    <property type="entry name" value="Hect, E3 ligase catalytic domains"/>
    <property type="match status" value="1"/>
</dbReference>
<dbReference type="InterPro" id="IPR000008">
    <property type="entry name" value="C2_dom"/>
</dbReference>
<dbReference type="InterPro" id="IPR035892">
    <property type="entry name" value="C2_domain_sf"/>
</dbReference>
<dbReference type="InterPro" id="IPR024928">
    <property type="entry name" value="E3_ub_ligase_SMURF1"/>
</dbReference>
<dbReference type="InterPro" id="IPR050409">
    <property type="entry name" value="E3_ubiq-protein_ligase"/>
</dbReference>
<dbReference type="InterPro" id="IPR000569">
    <property type="entry name" value="HECT_dom"/>
</dbReference>
<dbReference type="InterPro" id="IPR035983">
    <property type="entry name" value="Hect_E3_ubiquitin_ligase"/>
</dbReference>
<dbReference type="InterPro" id="IPR001202">
    <property type="entry name" value="WW_dom"/>
</dbReference>
<dbReference type="InterPro" id="IPR036020">
    <property type="entry name" value="WW_dom_sf"/>
</dbReference>
<dbReference type="PANTHER" id="PTHR11254:SF300">
    <property type="entry name" value="E3 UBIQUITIN-PROTEIN LIGASE SMURF2"/>
    <property type="match status" value="1"/>
</dbReference>
<dbReference type="PANTHER" id="PTHR11254">
    <property type="entry name" value="HECT DOMAIN UBIQUITIN-PROTEIN LIGASE"/>
    <property type="match status" value="1"/>
</dbReference>
<dbReference type="Pfam" id="PF00168">
    <property type="entry name" value="C2"/>
    <property type="match status" value="1"/>
</dbReference>
<dbReference type="Pfam" id="PF00632">
    <property type="entry name" value="HECT"/>
    <property type="match status" value="1"/>
</dbReference>
<dbReference type="Pfam" id="PF00397">
    <property type="entry name" value="WW"/>
    <property type="match status" value="3"/>
</dbReference>
<dbReference type="PIRSF" id="PIRSF001569">
    <property type="entry name" value="E3_ub_ligase_SMURF1"/>
    <property type="match status" value="1"/>
</dbReference>
<dbReference type="SMART" id="SM00239">
    <property type="entry name" value="C2"/>
    <property type="match status" value="1"/>
</dbReference>
<dbReference type="SMART" id="SM00119">
    <property type="entry name" value="HECTc"/>
    <property type="match status" value="1"/>
</dbReference>
<dbReference type="SMART" id="SM00456">
    <property type="entry name" value="WW"/>
    <property type="match status" value="3"/>
</dbReference>
<dbReference type="SUPFAM" id="SSF49562">
    <property type="entry name" value="C2 domain (Calcium/lipid-binding domain, CaLB)"/>
    <property type="match status" value="1"/>
</dbReference>
<dbReference type="SUPFAM" id="SSF56204">
    <property type="entry name" value="Hect, E3 ligase catalytic domain"/>
    <property type="match status" value="1"/>
</dbReference>
<dbReference type="SUPFAM" id="SSF51045">
    <property type="entry name" value="WW domain"/>
    <property type="match status" value="3"/>
</dbReference>
<dbReference type="PROSITE" id="PS50004">
    <property type="entry name" value="C2"/>
    <property type="match status" value="1"/>
</dbReference>
<dbReference type="PROSITE" id="PS50237">
    <property type="entry name" value="HECT"/>
    <property type="match status" value="1"/>
</dbReference>
<dbReference type="PROSITE" id="PS01159">
    <property type="entry name" value="WW_DOMAIN_1"/>
    <property type="match status" value="1"/>
</dbReference>
<dbReference type="PROSITE" id="PS50020">
    <property type="entry name" value="WW_DOMAIN_2"/>
    <property type="match status" value="3"/>
</dbReference>
<protein>
    <recommendedName>
        <fullName>E3 ubiquitin-protein ligase SMURF2</fullName>
        <ecNumber evidence="1">2.3.2.26</ecNumber>
    </recommendedName>
    <alternativeName>
        <fullName>HECT-type E3 ubiquitin transferase SMURF2</fullName>
    </alternativeName>
    <alternativeName>
        <fullName>SMAD ubiquitination regulatory factor 2</fullName>
    </alternativeName>
    <alternativeName>
        <fullName>SMAD-specific E3 ubiquitin-protein ligase 2</fullName>
    </alternativeName>
</protein>
<name>SMUF2_DANRE</name>
<reference key="1">
    <citation type="submission" date="2007-12" db="EMBL/GenBank/DDBJ databases">
        <authorList>
            <consortium name="NIH - Zebrafish Gene Collection (ZGC) project"/>
        </authorList>
    </citation>
    <scope>NUCLEOTIDE SEQUENCE [LARGE SCALE MRNA]</scope>
    <source>
        <tissue>Kidney</tissue>
    </source>
</reference>
<accession>A9JRZ0</accession>
<comment type="function">
    <text evidence="1">E3 ubiquitin-protein ligase which accepts ubiquitin from an E2 ubiquitin-conjugating enzyme in the form of a thioester and then directly transfers the ubiquitin to targeted substrates.</text>
</comment>
<comment type="catalytic activity">
    <reaction evidence="1">
        <text>S-ubiquitinyl-[E2 ubiquitin-conjugating enzyme]-L-cysteine + [acceptor protein]-L-lysine = [E2 ubiquitin-conjugating enzyme]-L-cysteine + N(6)-ubiquitinyl-[acceptor protein]-L-lysine.</text>
        <dbReference type="EC" id="2.3.2.26"/>
    </reaction>
</comment>
<comment type="pathway">
    <text>Protein modification; protein ubiquitination.</text>
</comment>
<comment type="subcellular location">
    <subcellularLocation>
        <location evidence="1">Nucleus</location>
    </subcellularLocation>
    <subcellularLocation>
        <location evidence="1">Cytoplasm</location>
    </subcellularLocation>
    <subcellularLocation>
        <location evidence="1">Cell membrane</location>
    </subcellularLocation>
    <subcellularLocation>
        <location evidence="1">Membrane raft</location>
    </subcellularLocation>
</comment>
<gene>
    <name type="primary">smurf2</name>
</gene>
<organism>
    <name type="scientific">Danio rerio</name>
    <name type="common">Zebrafish</name>
    <name type="synonym">Brachydanio rerio</name>
    <dbReference type="NCBI Taxonomy" id="7955"/>
    <lineage>
        <taxon>Eukaryota</taxon>
        <taxon>Metazoa</taxon>
        <taxon>Chordata</taxon>
        <taxon>Craniata</taxon>
        <taxon>Vertebrata</taxon>
        <taxon>Euteleostomi</taxon>
        <taxon>Actinopterygii</taxon>
        <taxon>Neopterygii</taxon>
        <taxon>Teleostei</taxon>
        <taxon>Ostariophysi</taxon>
        <taxon>Cypriniformes</taxon>
        <taxon>Danionidae</taxon>
        <taxon>Danioninae</taxon>
        <taxon>Danio</taxon>
    </lineage>
</organism>
<sequence length="765" mass="87464">MSNQGVRRNGPVKLRLTVLCAKNLVKKDFFRLPDPFAKVVVDGSGQCHSTDTVRNTLDPKWNQHYDLYIGKSDSITISVWNHKKIHKKQGAGFLGCVRLLSNSINRLKDTGYQRLDLNKLGPNDSDTVRGQIVVSLQSRDRIGSGGPVVDCSRLFDNDLPDGWEERRTASGRIQYLNHITRSTQWERPTRPASEYSSPGRPLSCLVDENTPIMTPNGAAGVPADDPRVQERRVRSQRHRNYMSRTHLHTPPDLPEGYEQRTTQQGQVYFLHTQTGVSTWHDPRVPRDLSNVNCEELGPLPPGWEIRNTATGRVYFVDHNNRTTQFTDPRLSANLHLVLNPSPNGSRAAVEAQSSSRPGQLKEQAQSVVSPGNLPEDPECLTVPKYKRDLVQKLKILRQELSQQQPQAGHCRIEVSREEIFEESYRQVMKMRPKDLWKRLMVKFRGEEGLDYGGVAREWLYLLSHEMLNPYYGLFQYSRDDIYTLQINPDSAVNPEHLSYFHFVGRIMGMAVFHGHYIDGGFTLPFYKQLLGKPITLDDMESVDPDLHNSLVWILDNDITGVLDHTFCVEHNAYGEIIQHELKPNGKSIPVTQDTKKEYVRLYVNWRFLRGIEAQFLALQKGFNEVIPQHLLKAFDEKELELIVCGLGKIDINDWKSNTRLKHCTPDSNIVKWFWRAVESYDEERRARLLQFVTGSSRVPLQGFKALQGAAGPRLFTIHQIDASTNNLPKAHTCFNRIDIPPYESYDKLYDKLLTAIEETCGFAVE</sequence>
<keyword id="KW-1003">Cell membrane</keyword>
<keyword id="KW-0963">Cytoplasm</keyword>
<keyword id="KW-0472">Membrane</keyword>
<keyword id="KW-0539">Nucleus</keyword>
<keyword id="KW-1185">Reference proteome</keyword>
<keyword id="KW-0677">Repeat</keyword>
<keyword id="KW-0808">Transferase</keyword>
<keyword id="KW-0833">Ubl conjugation pathway</keyword>
<feature type="chain" id="PRO_0000358319" description="E3 ubiquitin-protein ligase SMURF2">
    <location>
        <begin position="1"/>
        <end position="765"/>
    </location>
</feature>
<feature type="domain" description="C2" evidence="2">
    <location>
        <begin position="1"/>
        <end position="117"/>
    </location>
</feature>
<feature type="domain" description="WW 1" evidence="4">
    <location>
        <begin position="157"/>
        <end position="190"/>
    </location>
</feature>
<feature type="domain" description="WW 2" evidence="4">
    <location>
        <begin position="251"/>
        <end position="284"/>
    </location>
</feature>
<feature type="domain" description="WW 3" evidence="4">
    <location>
        <begin position="297"/>
        <end position="330"/>
    </location>
</feature>
<feature type="domain" description="HECT" evidence="3">
    <location>
        <begin position="431"/>
        <end position="765"/>
    </location>
</feature>
<feature type="region of interest" description="Disordered" evidence="5">
    <location>
        <begin position="341"/>
        <end position="375"/>
    </location>
</feature>
<feature type="compositionally biased region" description="Polar residues" evidence="5">
    <location>
        <begin position="351"/>
        <end position="369"/>
    </location>
</feature>
<feature type="active site" description="Glycyl thioester intermediate" evidence="3">
    <location>
        <position position="733"/>
    </location>
</feature>